<keyword id="KW-0186">Copper</keyword>
<keyword id="KW-0274">FAD</keyword>
<keyword id="KW-0285">Flavoprotein</keyword>
<keyword id="KW-0479">Metal-binding</keyword>
<keyword id="KW-0534">Nitrate assimilation</keyword>
<keyword id="KW-0560">Oxidoreductase</keyword>
<keyword id="KW-0574">Periplasm</keyword>
<keyword id="KW-0677">Repeat</keyword>
<keyword id="KW-0732">Signal</keyword>
<organism>
    <name type="scientific">Rhizobium sullae</name>
    <name type="common">Rhizobium hedysari</name>
    <dbReference type="NCBI Taxonomy" id="50338"/>
    <lineage>
        <taxon>Bacteria</taxon>
        <taxon>Pseudomonadati</taxon>
        <taxon>Pseudomonadota</taxon>
        <taxon>Alphaproteobacteria</taxon>
        <taxon>Hyphomicrobiales</taxon>
        <taxon>Rhizobiaceae</taxon>
        <taxon>Rhizobium/Agrobacterium group</taxon>
        <taxon>Rhizobium</taxon>
    </lineage>
</organism>
<sequence>MTNTLQMTRRTMLTGAAVAGALTPILTSGGGNASPTPVRKLSATEIAALPRRKLDLVKPPFVHVHTQKAEGGPKVVEVTLTIEEKKLVIDGKGTEVNAMTFDGSVPGPLIVVHQDDYVEVTLVNPETNTLQHNIDFHSATGALGGGALTVVNPGESAVLRFKATKAGVFVYHCAPPGMVPWHVTSGMNGAIMVLPREGLTDGHGKELVYDKVYYLGEQDFYIPRDEKGEFKKYDSPGEAYEDTVAVMRTLTPTHIVFNGAVGALTGENALTAAVGERVLIVHSQANRDTRPHLIGGHGEYVWRTGKFVNVPDRDQETWFIPGPTRGAAYYTFEQPGIYAYVNHNLIEAFELGAAAHFKVTGDWNDDLMTTVRSPSGS</sequence>
<evidence type="ECO:0000250" key="1"/>
<evidence type="ECO:0000255" key="2">
    <source>
        <dbReference type="PROSITE-ProRule" id="PRU00648"/>
    </source>
</evidence>
<evidence type="ECO:0000305" key="3"/>
<dbReference type="EC" id="1.7.2.1"/>
<dbReference type="EMBL" id="U65658">
    <property type="protein sequence ID" value="AAB05880.1"/>
    <property type="molecule type" value="Genomic_DNA"/>
</dbReference>
<dbReference type="SMR" id="Q60214"/>
<dbReference type="STRING" id="1041146.GCA_000427985_06338"/>
<dbReference type="UniPathway" id="UPA00652">
    <property type="reaction ID" value="UER00707"/>
</dbReference>
<dbReference type="GO" id="GO:0042597">
    <property type="term" value="C:periplasmic space"/>
    <property type="evidence" value="ECO:0007669"/>
    <property type="project" value="UniProtKB-SubCell"/>
</dbReference>
<dbReference type="GO" id="GO:0005507">
    <property type="term" value="F:copper ion binding"/>
    <property type="evidence" value="ECO:0007669"/>
    <property type="project" value="InterPro"/>
</dbReference>
<dbReference type="GO" id="GO:0050421">
    <property type="term" value="F:nitrite reductase (NO-forming) activity"/>
    <property type="evidence" value="ECO:0007669"/>
    <property type="project" value="UniProtKB-EC"/>
</dbReference>
<dbReference type="GO" id="GO:0019333">
    <property type="term" value="P:denitrification pathway"/>
    <property type="evidence" value="ECO:0007669"/>
    <property type="project" value="UniProtKB-UniPathway"/>
</dbReference>
<dbReference type="GO" id="GO:0042128">
    <property type="term" value="P:nitrate assimilation"/>
    <property type="evidence" value="ECO:0007669"/>
    <property type="project" value="UniProtKB-KW"/>
</dbReference>
<dbReference type="CDD" id="cd11020">
    <property type="entry name" value="CuRO_1_CuNIR"/>
    <property type="match status" value="1"/>
</dbReference>
<dbReference type="Gene3D" id="2.60.40.420">
    <property type="entry name" value="Cupredoxins - blue copper proteins"/>
    <property type="match status" value="2"/>
</dbReference>
<dbReference type="InterPro" id="IPR011707">
    <property type="entry name" value="Cu-oxidase-like_N"/>
</dbReference>
<dbReference type="InterPro" id="IPR001117">
    <property type="entry name" value="Cu-oxidase_2nd"/>
</dbReference>
<dbReference type="InterPro" id="IPR008972">
    <property type="entry name" value="Cupredoxin"/>
</dbReference>
<dbReference type="InterPro" id="IPR001287">
    <property type="entry name" value="NO2-reductase_Cu"/>
</dbReference>
<dbReference type="InterPro" id="IPR006311">
    <property type="entry name" value="TAT_signal"/>
</dbReference>
<dbReference type="NCBIfam" id="TIGR02376">
    <property type="entry name" value="Cu_nitrite_red"/>
    <property type="match status" value="1"/>
</dbReference>
<dbReference type="Pfam" id="PF00394">
    <property type="entry name" value="Cu-oxidase"/>
    <property type="match status" value="1"/>
</dbReference>
<dbReference type="Pfam" id="PF07732">
    <property type="entry name" value="Cu-oxidase_3"/>
    <property type="match status" value="1"/>
</dbReference>
<dbReference type="PRINTS" id="PR00695">
    <property type="entry name" value="CUNO2RDTASE"/>
</dbReference>
<dbReference type="SUPFAM" id="SSF49503">
    <property type="entry name" value="Cupredoxins"/>
    <property type="match status" value="2"/>
</dbReference>
<dbReference type="PROSITE" id="PS51318">
    <property type="entry name" value="TAT"/>
    <property type="match status" value="1"/>
</dbReference>
<name>NIR_RHISU</name>
<comment type="catalytic activity">
    <reaction>
        <text>nitric oxide + Fe(III)-[cytochrome c] + H2O = Fe(II)-[cytochrome c] + nitrite + 2 H(+)</text>
        <dbReference type="Rhea" id="RHEA:15233"/>
        <dbReference type="Rhea" id="RHEA-COMP:10350"/>
        <dbReference type="Rhea" id="RHEA-COMP:14399"/>
        <dbReference type="ChEBI" id="CHEBI:15377"/>
        <dbReference type="ChEBI" id="CHEBI:15378"/>
        <dbReference type="ChEBI" id="CHEBI:16301"/>
        <dbReference type="ChEBI" id="CHEBI:16480"/>
        <dbReference type="ChEBI" id="CHEBI:29033"/>
        <dbReference type="ChEBI" id="CHEBI:29034"/>
        <dbReference type="EC" id="1.7.2.1"/>
    </reaction>
</comment>
<comment type="cofactor">
    <cofactor evidence="1">
        <name>Cu(2+)</name>
        <dbReference type="ChEBI" id="CHEBI:29036"/>
    </cofactor>
    <text evidence="1">Binds 1 Cu(2+) ion. The Cu(2+) ion is held by residues from each of 2 monomers of the trimer. Nitrite is bound to the Cu(2+) ion site. Pseudoazurin is the physiological electron donor for the Cu-NIR in vitro.</text>
</comment>
<comment type="cofactor">
    <cofactor evidence="1">
        <name>Cu(+)</name>
        <dbReference type="ChEBI" id="CHEBI:49552"/>
    </cofactor>
    <text evidence="1">Binds 1 Cu(+) ion. The Cu(+) ion is bound within a single monomer.</text>
</comment>
<comment type="cofactor">
    <cofactor evidence="1">
        <name>FAD</name>
        <dbReference type="ChEBI" id="CHEBI:57692"/>
    </cofactor>
</comment>
<comment type="pathway">
    <text>Nitrogen metabolism; nitrate reduction (denitrification); dinitrogen from nitrate: step 2/4.</text>
</comment>
<comment type="subunit">
    <text evidence="1">Homotrimer.</text>
</comment>
<comment type="subcellular location">
    <subcellularLocation>
        <location evidence="1">Periplasm</location>
    </subcellularLocation>
</comment>
<comment type="domain">
    <text>The type I copper site in NIR plays a crucial role for electron transfer from pseudoazurin to the type II copper site of NIR, which comprises the catalytic center of NIR for the reduction of nitrite.</text>
</comment>
<comment type="PTM">
    <text>Predicted to be exported by the Tat system. The position of the signal peptide cleavage has not been experimentally proven.</text>
</comment>
<comment type="similarity">
    <text evidence="3">Belongs to the multicopper oxidase family.</text>
</comment>
<gene>
    <name type="primary">nirK</name>
</gene>
<protein>
    <recommendedName>
        <fullName>Copper-containing nitrite reductase</fullName>
        <ecNumber>1.7.2.1</ecNumber>
    </recommendedName>
    <alternativeName>
        <fullName>Cu-NIR</fullName>
    </alternativeName>
</protein>
<feature type="signal peptide" description="Tat-type signal" evidence="2">
    <location>
        <begin position="1"/>
        <end position="35"/>
    </location>
</feature>
<feature type="chain" id="PRO_0000002990" description="Copper-containing nitrite reductase">
    <location>
        <begin position="36"/>
        <end position="377"/>
    </location>
</feature>
<feature type="domain" description="Plastocyanin-like 1">
    <location>
        <begin position="99"/>
        <end position="194"/>
    </location>
</feature>
<feature type="domain" description="Plastocyanin-like 2">
    <location>
        <begin position="259"/>
        <end position="360"/>
    </location>
</feature>
<feature type="binding site" description="type 1 copper site" evidence="1">
    <location>
        <position position="132"/>
    </location>
    <ligand>
        <name>Cu cation</name>
        <dbReference type="ChEBI" id="CHEBI:23378"/>
        <label>1</label>
    </ligand>
</feature>
<feature type="binding site" description="type 2 copper site" evidence="1">
    <location>
        <position position="137"/>
    </location>
    <ligand>
        <name>Cu cation</name>
        <dbReference type="ChEBI" id="CHEBI:23378"/>
        <label>2</label>
    </ligand>
</feature>
<feature type="binding site" description="type 2 copper site" evidence="1">
    <location>
        <position position="172"/>
    </location>
    <ligand>
        <name>Cu cation</name>
        <dbReference type="ChEBI" id="CHEBI:23378"/>
        <label>2</label>
    </ligand>
</feature>
<feature type="binding site" description="type 1 copper site" evidence="1">
    <location>
        <position position="173"/>
    </location>
    <ligand>
        <name>Cu cation</name>
        <dbReference type="ChEBI" id="CHEBI:23378"/>
        <label>1</label>
    </ligand>
</feature>
<feature type="binding site" description="type 1 copper site" evidence="1">
    <location>
        <position position="182"/>
    </location>
    <ligand>
        <name>Cu cation</name>
        <dbReference type="ChEBI" id="CHEBI:23378"/>
        <label>1</label>
    </ligand>
</feature>
<feature type="binding site" description="type 1 copper site" evidence="1">
    <location>
        <position position="187"/>
    </location>
    <ligand>
        <name>Cu cation</name>
        <dbReference type="ChEBI" id="CHEBI:23378"/>
        <label>1</label>
    </ligand>
</feature>
<feature type="binding site" description="type 2 copper site" evidence="1">
    <location>
        <position position="343"/>
    </location>
    <ligand>
        <name>Cu cation</name>
        <dbReference type="ChEBI" id="CHEBI:23378"/>
        <label>2</label>
    </ligand>
</feature>
<reference key="1">
    <citation type="journal article" date="1996" name="Appl. Environ. Microbiol.">
        <title>Characterization of the gene encoding nitrite reductase and the physiological consequences of its expression in the nondenitrifying Rhizobium 'hedysari' strain HCNT1.</title>
        <authorList>
            <person name="Toffanin A."/>
            <person name="Wu Q."/>
            <person name="Maskus M."/>
            <person name="Caselia S."/>
            <person name="Abruna H.D."/>
            <person name="Shapleigh J.P."/>
        </authorList>
    </citation>
    <scope>NUCLEOTIDE SEQUENCE [GENOMIC DNA]</scope>
    <source>
        <strain>HCNT1</strain>
    </source>
</reference>
<proteinExistence type="inferred from homology"/>
<accession>Q60214</accession>